<gene>
    <name type="primary">VPS16</name>
</gene>
<protein>
    <recommendedName>
        <fullName>Vacuolar protein sorting-associated protein 16 homolog</fullName>
    </recommendedName>
</protein>
<name>VPS16_BOVIN</name>
<proteinExistence type="evidence at transcript level"/>
<dbReference type="EMBL" id="BT020903">
    <property type="protein sequence ID" value="AAX08920.1"/>
    <property type="molecule type" value="mRNA"/>
</dbReference>
<dbReference type="RefSeq" id="NP_001015522.1">
    <property type="nucleotide sequence ID" value="NM_001015522.1"/>
</dbReference>
<dbReference type="FunCoup" id="Q5E9L7">
    <property type="interactions" value="4745"/>
</dbReference>
<dbReference type="STRING" id="9913.ENSBTAP00000001744"/>
<dbReference type="PaxDb" id="9913-ENSBTAP00000001744"/>
<dbReference type="GeneID" id="505361"/>
<dbReference type="KEGG" id="bta:505361"/>
<dbReference type="CTD" id="64601"/>
<dbReference type="eggNOG" id="KOG2280">
    <property type="taxonomic scope" value="Eukaryota"/>
</dbReference>
<dbReference type="InParanoid" id="Q5E9L7"/>
<dbReference type="OrthoDB" id="1792at2759"/>
<dbReference type="Proteomes" id="UP000009136">
    <property type="component" value="Unplaced"/>
</dbReference>
<dbReference type="GO" id="GO:0005776">
    <property type="term" value="C:autophagosome"/>
    <property type="evidence" value="ECO:0007669"/>
    <property type="project" value="UniProtKB-SubCell"/>
</dbReference>
<dbReference type="GO" id="GO:0030136">
    <property type="term" value="C:clathrin-coated vesicle"/>
    <property type="evidence" value="ECO:0007669"/>
    <property type="project" value="UniProtKB-SubCell"/>
</dbReference>
<dbReference type="GO" id="GO:0005769">
    <property type="term" value="C:early endosome"/>
    <property type="evidence" value="ECO:0007669"/>
    <property type="project" value="UniProtKB-SubCell"/>
</dbReference>
<dbReference type="GO" id="GO:0005768">
    <property type="term" value="C:endosome"/>
    <property type="evidence" value="ECO:0000318"/>
    <property type="project" value="GO_Central"/>
</dbReference>
<dbReference type="GO" id="GO:0030897">
    <property type="term" value="C:HOPS complex"/>
    <property type="evidence" value="ECO:0000318"/>
    <property type="project" value="GO_Central"/>
</dbReference>
<dbReference type="GO" id="GO:0031902">
    <property type="term" value="C:late endosome membrane"/>
    <property type="evidence" value="ECO:0007669"/>
    <property type="project" value="UniProtKB-SubCell"/>
</dbReference>
<dbReference type="GO" id="GO:0005765">
    <property type="term" value="C:lysosomal membrane"/>
    <property type="evidence" value="ECO:0007669"/>
    <property type="project" value="UniProtKB-SubCell"/>
</dbReference>
<dbReference type="GO" id="GO:0003779">
    <property type="term" value="F:actin binding"/>
    <property type="evidence" value="ECO:0000318"/>
    <property type="project" value="GO_Central"/>
</dbReference>
<dbReference type="GO" id="GO:0016197">
    <property type="term" value="P:endosomal transport"/>
    <property type="evidence" value="ECO:0000318"/>
    <property type="project" value="GO_Central"/>
</dbReference>
<dbReference type="GO" id="GO:0006886">
    <property type="term" value="P:intracellular protein transport"/>
    <property type="evidence" value="ECO:0007669"/>
    <property type="project" value="InterPro"/>
</dbReference>
<dbReference type="GO" id="GO:0042144">
    <property type="term" value="P:vacuole fusion, non-autophagic"/>
    <property type="evidence" value="ECO:0000318"/>
    <property type="project" value="GO_Central"/>
</dbReference>
<dbReference type="FunFam" id="1.10.150.780:FF:000001">
    <property type="entry name" value="Vacuolar protein sorting-associated protein 16 homolog"/>
    <property type="match status" value="1"/>
</dbReference>
<dbReference type="Gene3D" id="1.10.150.780">
    <property type="entry name" value="Vps16, C-terminal region"/>
    <property type="match status" value="1"/>
</dbReference>
<dbReference type="InterPro" id="IPR016534">
    <property type="entry name" value="VPS16"/>
</dbReference>
<dbReference type="InterPro" id="IPR006925">
    <property type="entry name" value="Vps16_C"/>
</dbReference>
<dbReference type="InterPro" id="IPR038132">
    <property type="entry name" value="Vps16_C_sf"/>
</dbReference>
<dbReference type="InterPro" id="IPR006926">
    <property type="entry name" value="Vps16_N"/>
</dbReference>
<dbReference type="PANTHER" id="PTHR12811">
    <property type="entry name" value="VACUOLAR PROTEIN SORTING VPS16"/>
    <property type="match status" value="1"/>
</dbReference>
<dbReference type="PANTHER" id="PTHR12811:SF0">
    <property type="entry name" value="VACUOLAR PROTEIN SORTING-ASSOCIATED PROTEIN 16 HOMOLOG"/>
    <property type="match status" value="1"/>
</dbReference>
<dbReference type="Pfam" id="PF04840">
    <property type="entry name" value="Vps16_C"/>
    <property type="match status" value="1"/>
</dbReference>
<dbReference type="Pfam" id="PF04841">
    <property type="entry name" value="Vps16_N"/>
    <property type="match status" value="1"/>
</dbReference>
<dbReference type="PIRSF" id="PIRSF007949">
    <property type="entry name" value="VPS16"/>
    <property type="match status" value="1"/>
</dbReference>
<keyword id="KW-0968">Cytoplasmic vesicle</keyword>
<keyword id="KW-0967">Endosome</keyword>
<keyword id="KW-0458">Lysosome</keyword>
<keyword id="KW-0472">Membrane</keyword>
<keyword id="KW-0944">Nitration</keyword>
<keyword id="KW-0653">Protein transport</keyword>
<keyword id="KW-1185">Reference proteome</keyword>
<keyword id="KW-0813">Transport</keyword>
<evidence type="ECO:0000250" key="1">
    <source>
        <dbReference type="UniProtKB" id="Q920Q4"/>
    </source>
</evidence>
<evidence type="ECO:0000250" key="2">
    <source>
        <dbReference type="UniProtKB" id="Q9H269"/>
    </source>
</evidence>
<evidence type="ECO:0000305" key="3"/>
<feature type="chain" id="PRO_0000253018" description="Vacuolar protein sorting-associated protein 16 homolog">
    <location>
        <begin position="1"/>
        <end position="839"/>
    </location>
</feature>
<feature type="region of interest" description="Interaction with VPS33A" evidence="2">
    <location>
        <begin position="642"/>
        <end position="736"/>
    </location>
</feature>
<feature type="modified residue" description="3'-nitrotyrosine" evidence="1">
    <location>
        <position position="4"/>
    </location>
</feature>
<comment type="function">
    <text evidence="2">Plays a role in vesicle-mediated protein trafficking to lysosomal compartments including the endocytic membrane transport and autophagic pathways. Believed to act as a core component of the putative HOPS and CORVET endosomal tethering complexes which are proposed to be involved in the Rab5-to-Rab7 endosome conversion probably implicating MON1A/B, and via binding SNAREs and SNARE complexes to mediate tethering and docking events during SNARE-mediated membrane fusion. The HOPS complex is proposed to be recruited to Rab7 on the late endosomal membrane and to regulate late endocytic, phagocytic and autophagic traffic towards lysosomes. The CORVET complex is proposed to function as a Rab5 effector to mediate early endosome fusion probably in specific endosome subpopulations. Required for recruitment of VPS33A to the HOPS complex. Required for fusion of endosomes and autophagosomes with lysosomes; the function is dependent on its association with VPS33A but not VPS33B. The function in autophagosome-lysosome fusion implicates STX17 but not UVRAG.</text>
</comment>
<comment type="subunit">
    <text evidence="2">Core component of at least two putative endosomal tethering complexes, the homotypic fusion and vacuole protein sorting (HOPS) complex and the class C core vacuole/endosome tethering (CORVET) complex. Their common core is composed of the class C Vps proteins VPS11, VPS16, VPS18 and VPS33A, which in HOPS further associates with VPS39 and VPS41 and in CORVET with VPS8 and TGFBRAP1. Interacts with RAB5C. Interacts with STX17, MON1B. Associates with adapter protein complex 3 (AP-3) and clathrin:AP-3 complexes (By similarity).</text>
</comment>
<comment type="subcellular location">
    <subcellularLocation>
        <location evidence="2">Late endosome membrane</location>
        <topology evidence="2">Peripheral membrane protein</topology>
        <orientation evidence="2">Cytoplasmic side</orientation>
    </subcellularLocation>
    <subcellularLocation>
        <location evidence="2">Lysosome membrane</location>
        <topology evidence="2">Peripheral membrane protein</topology>
        <orientation evidence="2">Cytoplasmic side</orientation>
    </subcellularLocation>
    <subcellularLocation>
        <location evidence="2">Early endosome</location>
    </subcellularLocation>
    <subcellularLocation>
        <location>Cytoplasmic vesicle</location>
        <location>Clathrin-coated vesicle</location>
    </subcellularLocation>
    <subcellularLocation>
        <location evidence="2">Cytoplasmic vesicle</location>
        <location evidence="2">Autophagosome</location>
    </subcellularLocation>
    <text evidence="2">Colocalizes with AP-3, clathrin, Rab5 and Rab7b (By similarity). Cytoplasmic, peripheral membrane protein associated with early endosomes and late endosomes/lysosomes.</text>
</comment>
<comment type="similarity">
    <text evidence="3">Belongs to the VPS16 family.</text>
</comment>
<organism>
    <name type="scientific">Bos taurus</name>
    <name type="common">Bovine</name>
    <dbReference type="NCBI Taxonomy" id="9913"/>
    <lineage>
        <taxon>Eukaryota</taxon>
        <taxon>Metazoa</taxon>
        <taxon>Chordata</taxon>
        <taxon>Craniata</taxon>
        <taxon>Vertebrata</taxon>
        <taxon>Euteleostomi</taxon>
        <taxon>Mammalia</taxon>
        <taxon>Eutheria</taxon>
        <taxon>Laurasiatheria</taxon>
        <taxon>Artiodactyla</taxon>
        <taxon>Ruminantia</taxon>
        <taxon>Pecora</taxon>
        <taxon>Bovidae</taxon>
        <taxon>Bovinae</taxon>
        <taxon>Bos</taxon>
    </lineage>
</organism>
<reference key="1">
    <citation type="journal article" date="2005" name="BMC Genomics">
        <title>Characterization of 954 bovine full-CDS cDNA sequences.</title>
        <authorList>
            <person name="Harhay G.P."/>
            <person name="Sonstegard T.S."/>
            <person name="Keele J.W."/>
            <person name="Heaton M.P."/>
            <person name="Clawson M.L."/>
            <person name="Snelling W.M."/>
            <person name="Wiedmann R.T."/>
            <person name="Van Tassell C.P."/>
            <person name="Smith T.P.L."/>
        </authorList>
    </citation>
    <scope>NUCLEOTIDE SEQUENCE [LARGE SCALE MRNA]</scope>
</reference>
<sequence>MDCYTANWNPLGDSAFYRKYELYSMDWDLKEELRDCLVAAAPYGGPIALLRNPWRKEKPASARPVLEIYSASGVPLASLLWKSGPVVSLGWSAEEELLCVQEDGVVLVYGLHGDFRRHFSMGNEVLQNRVLDARIFHTEFGSGVAILTGAHRFTLSANVGDLKLRRMPEVPGLXSAPSCWTTVCQDRVAHILLAVGPDLYLLDHAACSAVTPPGLAPGVSSFLQMAVSFTYRHLALFTDTGYIWMGTASLKEKLCEFNCNIRAPPKQMVWCSRPRSKERAVVVAWERRLMVVGDAPESIQFVLDEDSYLVPELDGVRVFSRSTHEFLHEVPVASEEIFKIASMAPGALLLEAQKEYEKESQKADEYLREIQELGQLPQAVQQCIEAAGHEHWPDMQKSLLRAASFGKCFLDRFPPDSFVRMCQDLRVLNAIRDYHIGIPLTYSQYKQLTIQVLLDRLVLRRLYPLAIQICEYLRLPEVQGVSRILAHWACYKVQQKDVSDEDVARAINQKLGDTPGVSYSDIAARAYGCGRTELAIKLLEYEPRSGEQVPLLLKMKRSKLALSKAIESGDTDLVFTVLLHLKNELNRGDFFMTLRNQPMALSLYRQFCKHQELETLKDLYNQDDNHQELGSFHIRASYAAEERIEGRVAALQTAADAFYKAKNEFAAKATEDQMRLLRLQRRLEDELGGQFLDLSLHDTVTTLILSGQNKRAEQLARDFRIPDKRLWWLKLTALADLEDWEELEKFSKSKKSPIGYLPFVEICMKQHNKYEAKKYASRVGPEQKVKALLLVGDVAQAADVAIEHRNEAEMSLVLSHCTGATDGATADKIQRARAQAQKK</sequence>
<accession>Q5E9L7</accession>